<dbReference type="EC" id="6.1.1.7" evidence="1"/>
<dbReference type="EMBL" id="AE014184">
    <property type="protein sequence ID" value="AAO44473.1"/>
    <property type="molecule type" value="Genomic_DNA"/>
</dbReference>
<dbReference type="RefSeq" id="WP_011096344.1">
    <property type="nucleotide sequence ID" value="NC_004572.3"/>
</dbReference>
<dbReference type="SMR" id="Q83GD1"/>
<dbReference type="STRING" id="203267.TWT_376"/>
<dbReference type="GeneID" id="67388172"/>
<dbReference type="KEGG" id="twh:TWT_376"/>
<dbReference type="eggNOG" id="COG0013">
    <property type="taxonomic scope" value="Bacteria"/>
</dbReference>
<dbReference type="HOGENOM" id="CLU_004485_1_1_11"/>
<dbReference type="OrthoDB" id="9803884at2"/>
<dbReference type="Proteomes" id="UP000002200">
    <property type="component" value="Chromosome"/>
</dbReference>
<dbReference type="GO" id="GO:0005829">
    <property type="term" value="C:cytosol"/>
    <property type="evidence" value="ECO:0007669"/>
    <property type="project" value="TreeGrafter"/>
</dbReference>
<dbReference type="GO" id="GO:0004813">
    <property type="term" value="F:alanine-tRNA ligase activity"/>
    <property type="evidence" value="ECO:0007669"/>
    <property type="project" value="UniProtKB-UniRule"/>
</dbReference>
<dbReference type="GO" id="GO:0002161">
    <property type="term" value="F:aminoacyl-tRNA deacylase activity"/>
    <property type="evidence" value="ECO:0007669"/>
    <property type="project" value="TreeGrafter"/>
</dbReference>
<dbReference type="GO" id="GO:0005524">
    <property type="term" value="F:ATP binding"/>
    <property type="evidence" value="ECO:0007669"/>
    <property type="project" value="UniProtKB-UniRule"/>
</dbReference>
<dbReference type="GO" id="GO:0000049">
    <property type="term" value="F:tRNA binding"/>
    <property type="evidence" value="ECO:0007669"/>
    <property type="project" value="UniProtKB-KW"/>
</dbReference>
<dbReference type="GO" id="GO:0008270">
    <property type="term" value="F:zinc ion binding"/>
    <property type="evidence" value="ECO:0007669"/>
    <property type="project" value="UniProtKB-UniRule"/>
</dbReference>
<dbReference type="GO" id="GO:0006419">
    <property type="term" value="P:alanyl-tRNA aminoacylation"/>
    <property type="evidence" value="ECO:0007669"/>
    <property type="project" value="UniProtKB-UniRule"/>
</dbReference>
<dbReference type="CDD" id="cd00673">
    <property type="entry name" value="AlaRS_core"/>
    <property type="match status" value="1"/>
</dbReference>
<dbReference type="FunFam" id="3.30.980.10:FF:000004">
    <property type="entry name" value="Alanine--tRNA ligase, cytoplasmic"/>
    <property type="match status" value="1"/>
</dbReference>
<dbReference type="Gene3D" id="2.40.30.130">
    <property type="match status" value="1"/>
</dbReference>
<dbReference type="Gene3D" id="3.10.310.40">
    <property type="match status" value="1"/>
</dbReference>
<dbReference type="Gene3D" id="3.30.54.20">
    <property type="match status" value="1"/>
</dbReference>
<dbReference type="Gene3D" id="3.30.930.10">
    <property type="entry name" value="Bira Bifunctional Protein, Domain 2"/>
    <property type="match status" value="1"/>
</dbReference>
<dbReference type="Gene3D" id="3.30.980.10">
    <property type="entry name" value="Threonyl-trna Synthetase, Chain A, domain 2"/>
    <property type="match status" value="1"/>
</dbReference>
<dbReference type="HAMAP" id="MF_00036_B">
    <property type="entry name" value="Ala_tRNA_synth_B"/>
    <property type="match status" value="1"/>
</dbReference>
<dbReference type="InterPro" id="IPR045864">
    <property type="entry name" value="aa-tRNA-synth_II/BPL/LPL"/>
</dbReference>
<dbReference type="InterPro" id="IPR002318">
    <property type="entry name" value="Ala-tRNA-lgiase_IIc"/>
</dbReference>
<dbReference type="InterPro" id="IPR018162">
    <property type="entry name" value="Ala-tRNA-ligase_IIc_anticod-bd"/>
</dbReference>
<dbReference type="InterPro" id="IPR018165">
    <property type="entry name" value="Ala-tRNA-synth_IIc_core"/>
</dbReference>
<dbReference type="InterPro" id="IPR018164">
    <property type="entry name" value="Ala-tRNA-synth_IIc_N"/>
</dbReference>
<dbReference type="InterPro" id="IPR050058">
    <property type="entry name" value="Ala-tRNA_ligase"/>
</dbReference>
<dbReference type="InterPro" id="IPR023033">
    <property type="entry name" value="Ala_tRNA_ligase_euk/bac"/>
</dbReference>
<dbReference type="InterPro" id="IPR003156">
    <property type="entry name" value="DHHA1_dom"/>
</dbReference>
<dbReference type="InterPro" id="IPR018163">
    <property type="entry name" value="Thr/Ala-tRNA-synth_IIc_edit"/>
</dbReference>
<dbReference type="InterPro" id="IPR009000">
    <property type="entry name" value="Transl_B-barrel_sf"/>
</dbReference>
<dbReference type="InterPro" id="IPR012947">
    <property type="entry name" value="tRNA_SAD"/>
</dbReference>
<dbReference type="NCBIfam" id="TIGR00344">
    <property type="entry name" value="alaS"/>
    <property type="match status" value="1"/>
</dbReference>
<dbReference type="PANTHER" id="PTHR11777:SF9">
    <property type="entry name" value="ALANINE--TRNA LIGASE, CYTOPLASMIC"/>
    <property type="match status" value="1"/>
</dbReference>
<dbReference type="PANTHER" id="PTHR11777">
    <property type="entry name" value="ALANYL-TRNA SYNTHETASE"/>
    <property type="match status" value="1"/>
</dbReference>
<dbReference type="Pfam" id="PF02272">
    <property type="entry name" value="DHHA1"/>
    <property type="match status" value="1"/>
</dbReference>
<dbReference type="Pfam" id="PF01411">
    <property type="entry name" value="tRNA-synt_2c"/>
    <property type="match status" value="1"/>
</dbReference>
<dbReference type="Pfam" id="PF07973">
    <property type="entry name" value="tRNA_SAD"/>
    <property type="match status" value="1"/>
</dbReference>
<dbReference type="PRINTS" id="PR00980">
    <property type="entry name" value="TRNASYNTHALA"/>
</dbReference>
<dbReference type="SMART" id="SM00863">
    <property type="entry name" value="tRNA_SAD"/>
    <property type="match status" value="1"/>
</dbReference>
<dbReference type="SUPFAM" id="SSF55681">
    <property type="entry name" value="Class II aaRS and biotin synthetases"/>
    <property type="match status" value="1"/>
</dbReference>
<dbReference type="SUPFAM" id="SSF101353">
    <property type="entry name" value="Putative anticodon-binding domain of alanyl-tRNA synthetase (AlaRS)"/>
    <property type="match status" value="1"/>
</dbReference>
<dbReference type="SUPFAM" id="SSF55186">
    <property type="entry name" value="ThrRS/AlaRS common domain"/>
    <property type="match status" value="1"/>
</dbReference>
<dbReference type="SUPFAM" id="SSF50447">
    <property type="entry name" value="Translation proteins"/>
    <property type="match status" value="1"/>
</dbReference>
<dbReference type="PROSITE" id="PS50860">
    <property type="entry name" value="AA_TRNA_LIGASE_II_ALA"/>
    <property type="match status" value="1"/>
</dbReference>
<gene>
    <name evidence="1" type="primary">alaS</name>
    <name type="ordered locus">TWT_376</name>
</gene>
<name>SYA_TROWT</name>
<organism>
    <name type="scientific">Tropheryma whipplei (strain Twist)</name>
    <name type="common">Whipple's bacillus</name>
    <dbReference type="NCBI Taxonomy" id="203267"/>
    <lineage>
        <taxon>Bacteria</taxon>
        <taxon>Bacillati</taxon>
        <taxon>Actinomycetota</taxon>
        <taxon>Actinomycetes</taxon>
        <taxon>Micrococcales</taxon>
        <taxon>Tropherymataceae</taxon>
        <taxon>Tropheryma</taxon>
    </lineage>
</organism>
<proteinExistence type="inferred from homology"/>
<feature type="chain" id="PRO_0000075239" description="Alanine--tRNA ligase">
    <location>
        <begin position="1"/>
        <end position="880"/>
    </location>
</feature>
<feature type="binding site" evidence="1">
    <location>
        <position position="548"/>
    </location>
    <ligand>
        <name>Zn(2+)</name>
        <dbReference type="ChEBI" id="CHEBI:29105"/>
    </ligand>
</feature>
<feature type="binding site" evidence="1">
    <location>
        <position position="552"/>
    </location>
    <ligand>
        <name>Zn(2+)</name>
        <dbReference type="ChEBI" id="CHEBI:29105"/>
    </ligand>
</feature>
<feature type="binding site" evidence="1">
    <location>
        <position position="651"/>
    </location>
    <ligand>
        <name>Zn(2+)</name>
        <dbReference type="ChEBI" id="CHEBI:29105"/>
    </ligand>
</feature>
<feature type="binding site" evidence="1">
    <location>
        <position position="655"/>
    </location>
    <ligand>
        <name>Zn(2+)</name>
        <dbReference type="ChEBI" id="CHEBI:29105"/>
    </ligand>
</feature>
<protein>
    <recommendedName>
        <fullName evidence="1">Alanine--tRNA ligase</fullName>
        <ecNumber evidence="1">6.1.1.7</ecNumber>
    </recommendedName>
    <alternativeName>
        <fullName evidence="1">Alanyl-tRNA synthetase</fullName>
        <shortName evidence="1">AlaRS</shortName>
    </alternativeName>
</protein>
<keyword id="KW-0030">Aminoacyl-tRNA synthetase</keyword>
<keyword id="KW-0067">ATP-binding</keyword>
<keyword id="KW-0963">Cytoplasm</keyword>
<keyword id="KW-0436">Ligase</keyword>
<keyword id="KW-0479">Metal-binding</keyword>
<keyword id="KW-0547">Nucleotide-binding</keyword>
<keyword id="KW-0648">Protein biosynthesis</keyword>
<keyword id="KW-1185">Reference proteome</keyword>
<keyword id="KW-0694">RNA-binding</keyword>
<keyword id="KW-0820">tRNA-binding</keyword>
<keyword id="KW-0862">Zinc</keyword>
<comment type="function">
    <text evidence="1">Catalyzes the attachment of alanine to tRNA(Ala) in a two-step reaction: alanine is first activated by ATP to form Ala-AMP and then transferred to the acceptor end of tRNA(Ala). Also edits incorrectly charged Ser-tRNA(Ala) and Gly-tRNA(Ala) via its editing domain.</text>
</comment>
<comment type="catalytic activity">
    <reaction evidence="1">
        <text>tRNA(Ala) + L-alanine + ATP = L-alanyl-tRNA(Ala) + AMP + diphosphate</text>
        <dbReference type="Rhea" id="RHEA:12540"/>
        <dbReference type="Rhea" id="RHEA-COMP:9657"/>
        <dbReference type="Rhea" id="RHEA-COMP:9923"/>
        <dbReference type="ChEBI" id="CHEBI:30616"/>
        <dbReference type="ChEBI" id="CHEBI:33019"/>
        <dbReference type="ChEBI" id="CHEBI:57972"/>
        <dbReference type="ChEBI" id="CHEBI:78442"/>
        <dbReference type="ChEBI" id="CHEBI:78497"/>
        <dbReference type="ChEBI" id="CHEBI:456215"/>
        <dbReference type="EC" id="6.1.1.7"/>
    </reaction>
</comment>
<comment type="cofactor">
    <cofactor evidence="1">
        <name>Zn(2+)</name>
        <dbReference type="ChEBI" id="CHEBI:29105"/>
    </cofactor>
    <text evidence="1">Binds 1 zinc ion per subunit.</text>
</comment>
<comment type="subcellular location">
    <subcellularLocation>
        <location evidence="1">Cytoplasm</location>
    </subcellularLocation>
</comment>
<comment type="domain">
    <text evidence="1">Consists of three domains; the N-terminal catalytic domain, the editing domain and the C-terminal C-Ala domain. The editing domain removes incorrectly charged amino acids, while the C-Ala domain, along with tRNA(Ala), serves as a bridge to cooperatively bring together the editing and aminoacylation centers thus stimulating deacylation of misacylated tRNAs.</text>
</comment>
<comment type="similarity">
    <text evidence="1">Belongs to the class-II aminoacyl-tRNA synthetase family.</text>
</comment>
<evidence type="ECO:0000255" key="1">
    <source>
        <dbReference type="HAMAP-Rule" id="MF_00036"/>
    </source>
</evidence>
<accession>Q83GD1</accession>
<reference key="1">
    <citation type="journal article" date="2003" name="Genome Res.">
        <title>Tropheryma whipplei twist: a human pathogenic Actinobacteria with a reduced genome.</title>
        <authorList>
            <person name="Raoult D."/>
            <person name="Ogata H."/>
            <person name="Audic S."/>
            <person name="Robert C."/>
            <person name="Suhre K."/>
            <person name="Drancourt M."/>
            <person name="Claverie J.-M."/>
        </authorList>
    </citation>
    <scope>NUCLEOTIDE SEQUENCE [LARGE SCALE GENOMIC DNA]</scope>
    <source>
        <strain>Twist</strain>
    </source>
</reference>
<sequence length="880" mass="96655">MLTSDLRLLFLDFFAKRGHKVSPSASLISNDPSVMFTIAGMLPFIQCFLALEPPPHPRVVSVQKCIRTSDIDEVGKTPRHGTFFQMMGNFSFGDYFKKEAIEYAWEFLLSELDLAPDRLWVTIHGDDKESEKFWLLCGVPQERVQSLDSNFWSTGKAGPAGPCSEVFYDLHGGPGPGPEGDPDRYLEVWNLVFMQNLRDNDGHIISSLPKKCVDTGMGLERIAMITQGVGTIYDTDELKPILDEAGYISGKRYGKDRRDDISLRVLADHIRSSLMLVADGLRPSNEGRGYILRRLLRRSVRAAKLLGIQENCFDQLFAKAAQVMKVGYPELEGKLAEIKQVACLEEQSFSRALNAGTQLLSRSMSSSKKRVSGDLAFRLHDTHGFPIDLITEIAKDSGLDVDMDGFFTLMKEQKDRSRAALSRSKPIVSDTTGYEGLRSNFLGYEMLQVDTKITALVKDGTILTSAKQGDCVDIALEQTPFYATAGGQEADRGFIESDNFSGKVVTVFSPLPGLTVHRCEIVSGLVVSGEVVRASVDSANRFAACQSHTATHVIHAVVREMFGSTSVQMGSYNRAGYLRFDFSCSYAPTDSQRIELEERANRAIQSCLEISSTYTTLEKAVASGAIALFGERYGDTVRMVEIGGPWSRELCAGTHLRNSSEIAVVSLVSETSVASGIRRVECLTGFDAFSHFAQERALVDTVMRTLGATRQEMEGAIDDLRENLKRSKHALQTAKDKFLSAFAPRLLQEFKSVSSVRILIADLSKFLSGPLFSPFEFTAEDIRAVTLRCKKLLEEPHVLLLAAVISGRVHAACSIDLSSVKLSCMDDLSANNLIKVFLKTLDGSGGGRADFAQGAGWNAKLLDSALDNLKACVIGKLSGV</sequence>